<organism>
    <name type="scientific">Pseudomonas syringae pv. syringae (strain B728a)</name>
    <dbReference type="NCBI Taxonomy" id="205918"/>
    <lineage>
        <taxon>Bacteria</taxon>
        <taxon>Pseudomonadati</taxon>
        <taxon>Pseudomonadota</taxon>
        <taxon>Gammaproteobacteria</taxon>
        <taxon>Pseudomonadales</taxon>
        <taxon>Pseudomonadaceae</taxon>
        <taxon>Pseudomonas</taxon>
        <taxon>Pseudomonas syringae</taxon>
    </lineage>
</organism>
<reference key="1">
    <citation type="journal article" date="2005" name="Proc. Natl. Acad. Sci. U.S.A.">
        <title>Comparison of the complete genome sequences of Pseudomonas syringae pv. syringae B728a and pv. tomato DC3000.</title>
        <authorList>
            <person name="Feil H."/>
            <person name="Feil W.S."/>
            <person name="Chain P."/>
            <person name="Larimer F."/>
            <person name="Dibartolo G."/>
            <person name="Copeland A."/>
            <person name="Lykidis A."/>
            <person name="Trong S."/>
            <person name="Nolan M."/>
            <person name="Goltsman E."/>
            <person name="Thiel J."/>
            <person name="Malfatti S."/>
            <person name="Loper J.E."/>
            <person name="Lapidus A."/>
            <person name="Detter J.C."/>
            <person name="Land M."/>
            <person name="Richardson P.M."/>
            <person name="Kyrpides N.C."/>
            <person name="Ivanova N."/>
            <person name="Lindow S.E."/>
        </authorList>
    </citation>
    <scope>NUCLEOTIDE SEQUENCE [LARGE SCALE GENOMIC DNA]</scope>
    <source>
        <strain>B728a</strain>
    </source>
</reference>
<accession>Q4ZVL1</accession>
<proteinExistence type="inferred from homology"/>
<name>RNH_PSEU2</name>
<protein>
    <recommendedName>
        <fullName evidence="1">Ribonuclease H</fullName>
        <shortName evidence="1">RNase H</shortName>
        <ecNumber evidence="1">3.1.26.4</ecNumber>
    </recommendedName>
</protein>
<dbReference type="EC" id="3.1.26.4" evidence="1"/>
<dbReference type="EMBL" id="CP000075">
    <property type="protein sequence ID" value="AAY36811.1"/>
    <property type="molecule type" value="Genomic_DNA"/>
</dbReference>
<dbReference type="RefSeq" id="WP_003368579.1">
    <property type="nucleotide sequence ID" value="NC_007005.1"/>
</dbReference>
<dbReference type="RefSeq" id="YP_234849.1">
    <property type="nucleotide sequence ID" value="NC_007005.1"/>
</dbReference>
<dbReference type="SMR" id="Q4ZVL1"/>
<dbReference type="STRING" id="205918.Psyr_1763"/>
<dbReference type="KEGG" id="psb:Psyr_1763"/>
<dbReference type="PATRIC" id="fig|205918.7.peg.1801"/>
<dbReference type="eggNOG" id="COG0328">
    <property type="taxonomic scope" value="Bacteria"/>
</dbReference>
<dbReference type="HOGENOM" id="CLU_030894_6_0_6"/>
<dbReference type="OrthoDB" id="7845843at2"/>
<dbReference type="Proteomes" id="UP000000426">
    <property type="component" value="Chromosome"/>
</dbReference>
<dbReference type="GO" id="GO:0005737">
    <property type="term" value="C:cytoplasm"/>
    <property type="evidence" value="ECO:0007669"/>
    <property type="project" value="UniProtKB-SubCell"/>
</dbReference>
<dbReference type="GO" id="GO:0000287">
    <property type="term" value="F:magnesium ion binding"/>
    <property type="evidence" value="ECO:0007669"/>
    <property type="project" value="UniProtKB-UniRule"/>
</dbReference>
<dbReference type="GO" id="GO:0003676">
    <property type="term" value="F:nucleic acid binding"/>
    <property type="evidence" value="ECO:0007669"/>
    <property type="project" value="InterPro"/>
</dbReference>
<dbReference type="GO" id="GO:0004523">
    <property type="term" value="F:RNA-DNA hybrid ribonuclease activity"/>
    <property type="evidence" value="ECO:0007669"/>
    <property type="project" value="UniProtKB-UniRule"/>
</dbReference>
<dbReference type="GO" id="GO:0043137">
    <property type="term" value="P:DNA replication, removal of RNA primer"/>
    <property type="evidence" value="ECO:0007669"/>
    <property type="project" value="TreeGrafter"/>
</dbReference>
<dbReference type="CDD" id="cd09278">
    <property type="entry name" value="RNase_HI_prokaryote_like"/>
    <property type="match status" value="1"/>
</dbReference>
<dbReference type="FunFam" id="3.30.420.10:FF:000089">
    <property type="entry name" value="Ribonuclease H"/>
    <property type="match status" value="1"/>
</dbReference>
<dbReference type="Gene3D" id="3.30.420.10">
    <property type="entry name" value="Ribonuclease H-like superfamily/Ribonuclease H"/>
    <property type="match status" value="1"/>
</dbReference>
<dbReference type="HAMAP" id="MF_00042">
    <property type="entry name" value="RNase_H"/>
    <property type="match status" value="1"/>
</dbReference>
<dbReference type="InterPro" id="IPR050092">
    <property type="entry name" value="RNase_H"/>
</dbReference>
<dbReference type="InterPro" id="IPR012337">
    <property type="entry name" value="RNaseH-like_sf"/>
</dbReference>
<dbReference type="InterPro" id="IPR002156">
    <property type="entry name" value="RNaseH_domain"/>
</dbReference>
<dbReference type="InterPro" id="IPR036397">
    <property type="entry name" value="RNaseH_sf"/>
</dbReference>
<dbReference type="InterPro" id="IPR022892">
    <property type="entry name" value="RNaseHI"/>
</dbReference>
<dbReference type="NCBIfam" id="NF001236">
    <property type="entry name" value="PRK00203.1"/>
    <property type="match status" value="1"/>
</dbReference>
<dbReference type="PANTHER" id="PTHR10642">
    <property type="entry name" value="RIBONUCLEASE H1"/>
    <property type="match status" value="1"/>
</dbReference>
<dbReference type="PANTHER" id="PTHR10642:SF26">
    <property type="entry name" value="RIBONUCLEASE H1"/>
    <property type="match status" value="1"/>
</dbReference>
<dbReference type="Pfam" id="PF00075">
    <property type="entry name" value="RNase_H"/>
    <property type="match status" value="1"/>
</dbReference>
<dbReference type="SUPFAM" id="SSF53098">
    <property type="entry name" value="Ribonuclease H-like"/>
    <property type="match status" value="1"/>
</dbReference>
<dbReference type="PROSITE" id="PS50879">
    <property type="entry name" value="RNASE_H_1"/>
    <property type="match status" value="1"/>
</dbReference>
<evidence type="ECO:0000255" key="1">
    <source>
        <dbReference type="HAMAP-Rule" id="MF_00042"/>
    </source>
</evidence>
<evidence type="ECO:0000255" key="2">
    <source>
        <dbReference type="PROSITE-ProRule" id="PRU00408"/>
    </source>
</evidence>
<keyword id="KW-0963">Cytoplasm</keyword>
<keyword id="KW-0255">Endonuclease</keyword>
<keyword id="KW-0378">Hydrolase</keyword>
<keyword id="KW-0460">Magnesium</keyword>
<keyword id="KW-0479">Metal-binding</keyword>
<keyword id="KW-0540">Nuclease</keyword>
<sequence>MSDSVELFTDGACKGNPGPGGWGALLVCKGVEKELWGGEANTTNNRMELTGAIRGLEELKRPCEVTLVTDSQYVMKGITEWMVNWKKRGWKTAAKEPVKNADLWQLLDEQVSRHTVKWQWVRGHIGHPGNERADQLANRGVDEVRGIRHG</sequence>
<gene>
    <name evidence="1" type="primary">rnhA</name>
    <name type="ordered locus">Psyr_1763</name>
</gene>
<comment type="function">
    <text evidence="1">Endonuclease that specifically degrades the RNA of RNA-DNA hybrids.</text>
</comment>
<comment type="catalytic activity">
    <reaction evidence="1">
        <text>Endonucleolytic cleavage to 5'-phosphomonoester.</text>
        <dbReference type="EC" id="3.1.26.4"/>
    </reaction>
</comment>
<comment type="cofactor">
    <cofactor evidence="1">
        <name>Mg(2+)</name>
        <dbReference type="ChEBI" id="CHEBI:18420"/>
    </cofactor>
    <text evidence="1">Binds 1 Mg(2+) ion per subunit. May bind a second metal ion at a regulatory site, or after substrate binding.</text>
</comment>
<comment type="subunit">
    <text evidence="1">Monomer.</text>
</comment>
<comment type="subcellular location">
    <subcellularLocation>
        <location evidence="1">Cytoplasm</location>
    </subcellularLocation>
</comment>
<comment type="similarity">
    <text evidence="1">Belongs to the RNase H family.</text>
</comment>
<feature type="chain" id="PRO_1000074659" description="Ribonuclease H">
    <location>
        <begin position="1"/>
        <end position="150"/>
    </location>
</feature>
<feature type="domain" description="RNase H type-1" evidence="2">
    <location>
        <begin position="1"/>
        <end position="142"/>
    </location>
</feature>
<feature type="binding site" evidence="1">
    <location>
        <position position="10"/>
    </location>
    <ligand>
        <name>Mg(2+)</name>
        <dbReference type="ChEBI" id="CHEBI:18420"/>
        <label>1</label>
    </ligand>
</feature>
<feature type="binding site" evidence="1">
    <location>
        <position position="10"/>
    </location>
    <ligand>
        <name>Mg(2+)</name>
        <dbReference type="ChEBI" id="CHEBI:18420"/>
        <label>2</label>
    </ligand>
</feature>
<feature type="binding site" evidence="1">
    <location>
        <position position="48"/>
    </location>
    <ligand>
        <name>Mg(2+)</name>
        <dbReference type="ChEBI" id="CHEBI:18420"/>
        <label>1</label>
    </ligand>
</feature>
<feature type="binding site" evidence="1">
    <location>
        <position position="70"/>
    </location>
    <ligand>
        <name>Mg(2+)</name>
        <dbReference type="ChEBI" id="CHEBI:18420"/>
        <label>1</label>
    </ligand>
</feature>
<feature type="binding site" evidence="1">
    <location>
        <position position="134"/>
    </location>
    <ligand>
        <name>Mg(2+)</name>
        <dbReference type="ChEBI" id="CHEBI:18420"/>
        <label>2</label>
    </ligand>
</feature>